<accession>Q2QM47</accession>
<accession>Q0ILV6</accession>
<sequence length="1009" mass="106426">MDVDSRMTTESDSDSDAAAQGGGGGGFGSETSSASPSAPGTPTAMGAGGGAAPIAAAAIAAAASAAVVAGPRPAPGYTVVNAAMEKKEDGPGCRCGHTLTAVPAVGEEGAPGYVGPRLILFGGATALEGNSATPPSSAGSAGIRLAGATADVHCYDVSSNKWSRLTPVGEPPSPRAAHVATAVGTMVVIQGGIGPAGLSAEDLHVLDLTQQRPRWHRVVVQGPGPGPRYGHVMALVGQRFLLTIGGNDGKRPLADVWALDTAAKPYEWRKLEPEGEGPPPCMYATASARSDGLLLLCGGRDANSVPLASAYGLAKHRDGRWEWAIAPGVSPSPRYQHAAVFVNARLHVSGGALGGGRMVEDSSSVAVLDTAAGVWCDTKSVVTTPRTGRYSADAAGGDASVELTRRCRHAAAAVGDMIYVYGGLRGGVLLDDLLVAEDLAAAETTNAANQAAAIAAASDIQAGREPGRYAYNDEQTGQPATITSPDGAVVLGTPVAAPVNGDMYTDISPENAVIQGQRRMSKGVDYLVEASAAEAEAISATLAAVKARQVNGEAEHSPDREQSPDATPSVKQNASLIKPDYALSNNSTPPPGVRLHHRAVVVAAETGGALGGMVRQLSIDQFENEGRRVIYGTPESATAARKLLDRQMSINSVPKKVIASLLKPRGWKPPVRRQFFLDCNEIADLCDSAERIFSSEPSVLQLKAPIKIFGDLHGQFGDLMRLFDEYGAPSTAGDIAYIDYLFLGDYVDRGQHSLETITLLLALKVEYPLNVHLIRGNHEAADINALFGFRIECIERMGERDGIWTWHRMNRLFNWLPLAALIEKKIICMHGGIGRSINHVEQIENLQRPITMEAGSVVLMDLLWSDPTENDSVEGLRPNARGPGLVTFGPDRVMEFCNNNDLQLIVRAHECVMDGFERFAQGHLITLFSATNYCGTANNAGAILVLGRDLVVVPKLIHPLPPAITSPETSPEHHLEDTWMQELNANRPPTPTRGRPQAANNDRGSLAWI</sequence>
<name>BSL2_ORYSJ</name>
<feature type="chain" id="PRO_0000247274" description="Serine/threonine-protein phosphatase BSL2 homolog">
    <location>
        <begin position="1"/>
        <end position="1009"/>
    </location>
</feature>
<feature type="repeat" description="Kelch 1">
    <location>
        <begin position="136"/>
        <end position="182"/>
    </location>
</feature>
<feature type="repeat" description="Kelch 2">
    <location>
        <begin position="240"/>
        <end position="288"/>
    </location>
</feature>
<feature type="repeat" description="Kelch 3">
    <location>
        <begin position="293"/>
        <end position="344"/>
    </location>
</feature>
<feature type="repeat" description="Kelch 4">
    <location>
        <begin position="349"/>
        <end position="396"/>
    </location>
</feature>
<feature type="repeat" description="Kelch 5">
    <location>
        <begin position="417"/>
        <end position="463"/>
    </location>
</feature>
<feature type="region of interest" description="Disordered" evidence="2">
    <location>
        <begin position="1"/>
        <end position="48"/>
    </location>
</feature>
<feature type="region of interest" description="Disordered" evidence="2">
    <location>
        <begin position="549"/>
        <end position="572"/>
    </location>
</feature>
<feature type="region of interest" description="Disordered" evidence="2">
    <location>
        <begin position="984"/>
        <end position="1009"/>
    </location>
</feature>
<feature type="compositionally biased region" description="Low complexity" evidence="2">
    <location>
        <begin position="29"/>
        <end position="45"/>
    </location>
</feature>
<feature type="compositionally biased region" description="Basic and acidic residues" evidence="2">
    <location>
        <begin position="553"/>
        <end position="563"/>
    </location>
</feature>
<feature type="active site" description="Proton donor" evidence="1">
    <location>
        <position position="778"/>
    </location>
</feature>
<feature type="binding site" evidence="1">
    <location>
        <position position="711"/>
    </location>
    <ligand>
        <name>Mn(2+)</name>
        <dbReference type="ChEBI" id="CHEBI:29035"/>
        <label>1</label>
    </ligand>
</feature>
<feature type="binding site" evidence="1">
    <location>
        <position position="713"/>
    </location>
    <ligand>
        <name>Mn(2+)</name>
        <dbReference type="ChEBI" id="CHEBI:29035"/>
        <label>1</label>
    </ligand>
</feature>
<feature type="binding site" evidence="1">
    <location>
        <position position="745"/>
    </location>
    <ligand>
        <name>Mn(2+)</name>
        <dbReference type="ChEBI" id="CHEBI:29035"/>
        <label>1</label>
    </ligand>
</feature>
<feature type="binding site" evidence="1">
    <location>
        <position position="745"/>
    </location>
    <ligand>
        <name>Mn(2+)</name>
        <dbReference type="ChEBI" id="CHEBI:29035"/>
        <label>2</label>
    </ligand>
</feature>
<feature type="binding site" evidence="1">
    <location>
        <position position="777"/>
    </location>
    <ligand>
        <name>Mn(2+)</name>
        <dbReference type="ChEBI" id="CHEBI:29035"/>
        <label>2</label>
    </ligand>
</feature>
<feature type="binding site" evidence="1">
    <location>
        <position position="830"/>
    </location>
    <ligand>
        <name>Mn(2+)</name>
        <dbReference type="ChEBI" id="CHEBI:29035"/>
        <label>2</label>
    </ligand>
</feature>
<feature type="binding site" evidence="1">
    <location>
        <position position="909"/>
    </location>
    <ligand>
        <name>Mn(2+)</name>
        <dbReference type="ChEBI" id="CHEBI:29035"/>
        <label>2</label>
    </ligand>
</feature>
<protein>
    <recommendedName>
        <fullName>Serine/threonine-protein phosphatase BSL2 homolog</fullName>
        <ecNumber>3.1.3.16</ecNumber>
    </recommendedName>
    <alternativeName>
        <fullName>BSU1-like protein 2 homolog</fullName>
    </alternativeName>
</protein>
<proteinExistence type="evidence at transcript level"/>
<keyword id="KW-0378">Hydrolase</keyword>
<keyword id="KW-0880">Kelch repeat</keyword>
<keyword id="KW-0464">Manganese</keyword>
<keyword id="KW-0479">Metal-binding</keyword>
<keyword id="KW-0539">Nucleus</keyword>
<keyword id="KW-0904">Protein phosphatase</keyword>
<keyword id="KW-1185">Reference proteome</keyword>
<keyword id="KW-0677">Repeat</keyword>
<organism>
    <name type="scientific">Oryza sativa subsp. japonica</name>
    <name type="common">Rice</name>
    <dbReference type="NCBI Taxonomy" id="39947"/>
    <lineage>
        <taxon>Eukaryota</taxon>
        <taxon>Viridiplantae</taxon>
        <taxon>Streptophyta</taxon>
        <taxon>Embryophyta</taxon>
        <taxon>Tracheophyta</taxon>
        <taxon>Spermatophyta</taxon>
        <taxon>Magnoliopsida</taxon>
        <taxon>Liliopsida</taxon>
        <taxon>Poales</taxon>
        <taxon>Poaceae</taxon>
        <taxon>BOP clade</taxon>
        <taxon>Oryzoideae</taxon>
        <taxon>Oryzeae</taxon>
        <taxon>Oryzinae</taxon>
        <taxon>Oryza</taxon>
        <taxon>Oryza sativa</taxon>
    </lineage>
</organism>
<dbReference type="EC" id="3.1.3.16"/>
<dbReference type="EMBL" id="DP000011">
    <property type="protein sequence ID" value="ABA99873.2"/>
    <property type="molecule type" value="Genomic_DNA"/>
</dbReference>
<dbReference type="EMBL" id="AP008218">
    <property type="protein sequence ID" value="BAF30309.1"/>
    <property type="molecule type" value="Genomic_DNA"/>
</dbReference>
<dbReference type="EMBL" id="AP014968">
    <property type="protein sequence ID" value="BAT18111.1"/>
    <property type="molecule type" value="Genomic_DNA"/>
</dbReference>
<dbReference type="EMBL" id="AK065064">
    <property type="protein sequence ID" value="BAG89347.1"/>
    <property type="molecule type" value="mRNA"/>
</dbReference>
<dbReference type="RefSeq" id="XP_015620177.1">
    <property type="nucleotide sequence ID" value="XM_015764691.1"/>
</dbReference>
<dbReference type="SMR" id="Q2QM47"/>
<dbReference type="FunCoup" id="Q2QM47">
    <property type="interactions" value="264"/>
</dbReference>
<dbReference type="STRING" id="39947.Q2QM47"/>
<dbReference type="PaxDb" id="39947-Q2QM47"/>
<dbReference type="EnsemblPlants" id="Os12t0617900-02">
    <property type="protein sequence ID" value="Os12t0617900-02"/>
    <property type="gene ID" value="Os12g0617900"/>
</dbReference>
<dbReference type="Gramene" id="Os12t0617900-02">
    <property type="protein sequence ID" value="Os12t0617900-02"/>
    <property type="gene ID" value="Os12g0617900"/>
</dbReference>
<dbReference type="KEGG" id="dosa:Os12g0617900"/>
<dbReference type="eggNOG" id="KOG0374">
    <property type="taxonomic scope" value="Eukaryota"/>
</dbReference>
<dbReference type="eggNOG" id="KOG0379">
    <property type="taxonomic scope" value="Eukaryota"/>
</dbReference>
<dbReference type="InParanoid" id="Q2QM47"/>
<dbReference type="OMA" id="CKSEQPI"/>
<dbReference type="OrthoDB" id="309851at2759"/>
<dbReference type="PlantReactome" id="R-OSA-5632095">
    <property type="pathway name" value="Brassinosteroid signaling"/>
</dbReference>
<dbReference type="Proteomes" id="UP000000763">
    <property type="component" value="Chromosome 12"/>
</dbReference>
<dbReference type="Proteomes" id="UP000059680">
    <property type="component" value="Chromosome 12"/>
</dbReference>
<dbReference type="ExpressionAtlas" id="Q2QM47">
    <property type="expression patterns" value="baseline and differential"/>
</dbReference>
<dbReference type="GO" id="GO:0005634">
    <property type="term" value="C:nucleus"/>
    <property type="evidence" value="ECO:0007669"/>
    <property type="project" value="UniProtKB-SubCell"/>
</dbReference>
<dbReference type="GO" id="GO:0046872">
    <property type="term" value="F:metal ion binding"/>
    <property type="evidence" value="ECO:0007669"/>
    <property type="project" value="UniProtKB-KW"/>
</dbReference>
<dbReference type="GO" id="GO:0004722">
    <property type="term" value="F:protein serine/threonine phosphatase activity"/>
    <property type="evidence" value="ECO:0007669"/>
    <property type="project" value="UniProtKB-EC"/>
</dbReference>
<dbReference type="GO" id="GO:0009742">
    <property type="term" value="P:brassinosteroid mediated signaling pathway"/>
    <property type="evidence" value="ECO:0007669"/>
    <property type="project" value="InterPro"/>
</dbReference>
<dbReference type="CDD" id="cd07419">
    <property type="entry name" value="MPP_Bsu1_C"/>
    <property type="match status" value="1"/>
</dbReference>
<dbReference type="FunFam" id="2.120.10.80:FF:000042">
    <property type="entry name" value="Serine/threonine-protein phosphatase"/>
    <property type="match status" value="1"/>
</dbReference>
<dbReference type="FunFam" id="2.120.10.80:FF:000113">
    <property type="entry name" value="Serine/threonine-protein phosphatase"/>
    <property type="match status" value="1"/>
</dbReference>
<dbReference type="FunFam" id="3.60.21.10:FF:000008">
    <property type="entry name" value="Serine/threonine-protein phosphatase"/>
    <property type="match status" value="1"/>
</dbReference>
<dbReference type="Gene3D" id="3.60.21.10">
    <property type="match status" value="1"/>
</dbReference>
<dbReference type="Gene3D" id="2.120.10.80">
    <property type="entry name" value="Kelch-type beta propeller"/>
    <property type="match status" value="2"/>
</dbReference>
<dbReference type="InterPro" id="IPR004843">
    <property type="entry name" value="Calcineurin-like_PHP_ApaH"/>
</dbReference>
<dbReference type="InterPro" id="IPR015915">
    <property type="entry name" value="Kelch-typ_b-propeller"/>
</dbReference>
<dbReference type="InterPro" id="IPR006652">
    <property type="entry name" value="Kelch_1"/>
</dbReference>
<dbReference type="InterPro" id="IPR029052">
    <property type="entry name" value="Metallo-depent_PP-like"/>
</dbReference>
<dbReference type="InterPro" id="IPR041758">
    <property type="entry name" value="MPP_BSL_C"/>
</dbReference>
<dbReference type="InterPro" id="IPR006186">
    <property type="entry name" value="Ser/Thr-sp_prot-phosphatase"/>
</dbReference>
<dbReference type="InterPro" id="IPR012391">
    <property type="entry name" value="Ser/Thr_prot_Pase_BSU1"/>
</dbReference>
<dbReference type="PANTHER" id="PTHR46422">
    <property type="entry name" value="SERINE/THREONINE-PROTEIN PHOSPHATASE BSL3"/>
    <property type="match status" value="1"/>
</dbReference>
<dbReference type="PANTHER" id="PTHR46422:SF13">
    <property type="entry name" value="SERINE_THREONINE-PROTEIN PHOSPHATASE BSL2 HOMOLOG"/>
    <property type="match status" value="1"/>
</dbReference>
<dbReference type="Pfam" id="PF01344">
    <property type="entry name" value="Kelch_1"/>
    <property type="match status" value="1"/>
</dbReference>
<dbReference type="Pfam" id="PF24681">
    <property type="entry name" value="Kelch_KLHDC2_KLHL20_DRC7"/>
    <property type="match status" value="1"/>
</dbReference>
<dbReference type="Pfam" id="PF00149">
    <property type="entry name" value="Metallophos"/>
    <property type="match status" value="1"/>
</dbReference>
<dbReference type="PIRSF" id="PIRSF036363">
    <property type="entry name" value="PPP_BSU1"/>
    <property type="match status" value="1"/>
</dbReference>
<dbReference type="PRINTS" id="PR00114">
    <property type="entry name" value="STPHPHTASE"/>
</dbReference>
<dbReference type="SMART" id="SM00156">
    <property type="entry name" value="PP2Ac"/>
    <property type="match status" value="1"/>
</dbReference>
<dbReference type="SUPFAM" id="SSF117281">
    <property type="entry name" value="Kelch motif"/>
    <property type="match status" value="1"/>
</dbReference>
<dbReference type="SUPFAM" id="SSF56300">
    <property type="entry name" value="Metallo-dependent phosphatases"/>
    <property type="match status" value="1"/>
</dbReference>
<dbReference type="PROSITE" id="PS00125">
    <property type="entry name" value="SER_THR_PHOSPHATASE"/>
    <property type="match status" value="1"/>
</dbReference>
<reference key="1">
    <citation type="journal article" date="2005" name="BMC Biol.">
        <title>The sequence of rice chromosomes 11 and 12, rich in disease resistance genes and recent gene duplications.</title>
        <authorList>
            <consortium name="The rice chromosomes 11 and 12 sequencing consortia"/>
        </authorList>
    </citation>
    <scope>NUCLEOTIDE SEQUENCE [LARGE SCALE GENOMIC DNA]</scope>
    <source>
        <strain>cv. Nipponbare</strain>
    </source>
</reference>
<reference key="2">
    <citation type="journal article" date="2005" name="Nature">
        <title>The map-based sequence of the rice genome.</title>
        <authorList>
            <consortium name="International rice genome sequencing project (IRGSP)"/>
        </authorList>
    </citation>
    <scope>NUCLEOTIDE SEQUENCE [LARGE SCALE GENOMIC DNA]</scope>
    <source>
        <strain>cv. Nipponbare</strain>
    </source>
</reference>
<reference key="3">
    <citation type="journal article" date="2008" name="Nucleic Acids Res.">
        <title>The rice annotation project database (RAP-DB): 2008 update.</title>
        <authorList>
            <consortium name="The rice annotation project (RAP)"/>
        </authorList>
    </citation>
    <scope>GENOME REANNOTATION</scope>
    <source>
        <strain>cv. Nipponbare</strain>
    </source>
</reference>
<reference key="4">
    <citation type="journal article" date="2013" name="Rice">
        <title>Improvement of the Oryza sativa Nipponbare reference genome using next generation sequence and optical map data.</title>
        <authorList>
            <person name="Kawahara Y."/>
            <person name="de la Bastide M."/>
            <person name="Hamilton J.P."/>
            <person name="Kanamori H."/>
            <person name="McCombie W.R."/>
            <person name="Ouyang S."/>
            <person name="Schwartz D.C."/>
            <person name="Tanaka T."/>
            <person name="Wu J."/>
            <person name="Zhou S."/>
            <person name="Childs K.L."/>
            <person name="Davidson R.M."/>
            <person name="Lin H."/>
            <person name="Quesada-Ocampo L."/>
            <person name="Vaillancourt B."/>
            <person name="Sakai H."/>
            <person name="Lee S.S."/>
            <person name="Kim J."/>
            <person name="Numa H."/>
            <person name="Itoh T."/>
            <person name="Buell C.R."/>
            <person name="Matsumoto T."/>
        </authorList>
    </citation>
    <scope>GENOME REANNOTATION</scope>
    <source>
        <strain>cv. Nipponbare</strain>
    </source>
</reference>
<reference key="5">
    <citation type="journal article" date="2003" name="Science">
        <title>Collection, mapping, and annotation of over 28,000 cDNA clones from japonica rice.</title>
        <authorList>
            <consortium name="The rice full-length cDNA consortium"/>
        </authorList>
    </citation>
    <scope>NUCLEOTIDE SEQUENCE [LARGE SCALE MRNA]</scope>
    <source>
        <strain>cv. Nipponbare</strain>
    </source>
</reference>
<gene>
    <name type="primary">BSL2</name>
    <name type="ordered locus">Os12g0617900</name>
    <name type="ordered locus">LOC_Os12g42310</name>
</gene>
<comment type="catalytic activity">
    <reaction>
        <text>O-phospho-L-seryl-[protein] + H2O = L-seryl-[protein] + phosphate</text>
        <dbReference type="Rhea" id="RHEA:20629"/>
        <dbReference type="Rhea" id="RHEA-COMP:9863"/>
        <dbReference type="Rhea" id="RHEA-COMP:11604"/>
        <dbReference type="ChEBI" id="CHEBI:15377"/>
        <dbReference type="ChEBI" id="CHEBI:29999"/>
        <dbReference type="ChEBI" id="CHEBI:43474"/>
        <dbReference type="ChEBI" id="CHEBI:83421"/>
        <dbReference type="EC" id="3.1.3.16"/>
    </reaction>
</comment>
<comment type="catalytic activity">
    <reaction>
        <text>O-phospho-L-threonyl-[protein] + H2O = L-threonyl-[protein] + phosphate</text>
        <dbReference type="Rhea" id="RHEA:47004"/>
        <dbReference type="Rhea" id="RHEA-COMP:11060"/>
        <dbReference type="Rhea" id="RHEA-COMP:11605"/>
        <dbReference type="ChEBI" id="CHEBI:15377"/>
        <dbReference type="ChEBI" id="CHEBI:30013"/>
        <dbReference type="ChEBI" id="CHEBI:43474"/>
        <dbReference type="ChEBI" id="CHEBI:61977"/>
        <dbReference type="EC" id="3.1.3.16"/>
    </reaction>
</comment>
<comment type="cofactor">
    <cofactor evidence="1">
        <name>Mn(2+)</name>
        <dbReference type="ChEBI" id="CHEBI:29035"/>
    </cofactor>
    <text evidence="1">Binds 2 manganese ions per subunit.</text>
</comment>
<comment type="subcellular location">
    <subcellularLocation>
        <location evidence="1">Nucleus</location>
    </subcellularLocation>
</comment>
<comment type="similarity">
    <text evidence="3">Belongs to the PPP phosphatase family. BSU subfamily.</text>
</comment>
<evidence type="ECO:0000250" key="1"/>
<evidence type="ECO:0000256" key="2">
    <source>
        <dbReference type="SAM" id="MobiDB-lite"/>
    </source>
</evidence>
<evidence type="ECO:0000305" key="3"/>